<comment type="function">
    <text evidence="1">Attaches a formyl group to the free amino group of methionyl-tRNA(fMet). The formyl group appears to play a dual role in the initiator identity of N-formylmethionyl-tRNA by promoting its recognition by IF2 and preventing the misappropriation of this tRNA by the elongation apparatus.</text>
</comment>
<comment type="catalytic activity">
    <reaction evidence="1">
        <text>L-methionyl-tRNA(fMet) + (6R)-10-formyltetrahydrofolate = N-formyl-L-methionyl-tRNA(fMet) + (6S)-5,6,7,8-tetrahydrofolate + H(+)</text>
        <dbReference type="Rhea" id="RHEA:24380"/>
        <dbReference type="Rhea" id="RHEA-COMP:9952"/>
        <dbReference type="Rhea" id="RHEA-COMP:9953"/>
        <dbReference type="ChEBI" id="CHEBI:15378"/>
        <dbReference type="ChEBI" id="CHEBI:57453"/>
        <dbReference type="ChEBI" id="CHEBI:78530"/>
        <dbReference type="ChEBI" id="CHEBI:78844"/>
        <dbReference type="ChEBI" id="CHEBI:195366"/>
        <dbReference type="EC" id="2.1.2.9"/>
    </reaction>
</comment>
<comment type="similarity">
    <text evidence="1">Belongs to the Fmt family.</text>
</comment>
<organism>
    <name type="scientific">Chromohalobacter salexigens (strain ATCC BAA-138 / DSM 3043 / CIP 106854 / NCIMB 13768 / 1H11)</name>
    <dbReference type="NCBI Taxonomy" id="290398"/>
    <lineage>
        <taxon>Bacteria</taxon>
        <taxon>Pseudomonadati</taxon>
        <taxon>Pseudomonadota</taxon>
        <taxon>Gammaproteobacteria</taxon>
        <taxon>Oceanospirillales</taxon>
        <taxon>Halomonadaceae</taxon>
        <taxon>Chromohalobacter</taxon>
    </lineage>
</organism>
<accession>Q1QTJ4</accession>
<gene>
    <name evidence="1" type="primary">fmt</name>
    <name type="ordered locus">Csal_2868</name>
</gene>
<evidence type="ECO:0000255" key="1">
    <source>
        <dbReference type="HAMAP-Rule" id="MF_00182"/>
    </source>
</evidence>
<reference key="1">
    <citation type="journal article" date="2011" name="Stand. Genomic Sci.">
        <title>Complete genome sequence of the halophilic and highly halotolerant Chromohalobacter salexigens type strain (1H11(T)).</title>
        <authorList>
            <person name="Copeland A."/>
            <person name="O'Connor K."/>
            <person name="Lucas S."/>
            <person name="Lapidus A."/>
            <person name="Berry K.W."/>
            <person name="Detter J.C."/>
            <person name="Del Rio T.G."/>
            <person name="Hammon N."/>
            <person name="Dalin E."/>
            <person name="Tice H."/>
            <person name="Pitluck S."/>
            <person name="Bruce D."/>
            <person name="Goodwin L."/>
            <person name="Han C."/>
            <person name="Tapia R."/>
            <person name="Saunders E."/>
            <person name="Schmutz J."/>
            <person name="Brettin T."/>
            <person name="Larimer F."/>
            <person name="Land M."/>
            <person name="Hauser L."/>
            <person name="Vargas C."/>
            <person name="Nieto J.J."/>
            <person name="Kyrpides N.C."/>
            <person name="Ivanova N."/>
            <person name="Goker M."/>
            <person name="Klenk H.P."/>
            <person name="Csonka L.N."/>
            <person name="Woyke T."/>
        </authorList>
    </citation>
    <scope>NUCLEOTIDE SEQUENCE [LARGE SCALE GENOMIC DNA]</scope>
    <source>
        <strain>ATCC BAA-138 / DSM 3043 / CIP 106854 / NCIMB 13768 / 1H11</strain>
    </source>
</reference>
<protein>
    <recommendedName>
        <fullName evidence="1">Methionyl-tRNA formyltransferase</fullName>
        <ecNumber evidence="1">2.1.2.9</ecNumber>
    </recommendedName>
</protein>
<proteinExistence type="inferred from homology"/>
<keyword id="KW-0648">Protein biosynthesis</keyword>
<keyword id="KW-1185">Reference proteome</keyword>
<keyword id="KW-0808">Transferase</keyword>
<name>FMT_CHRSD</name>
<dbReference type="EC" id="2.1.2.9" evidence="1"/>
<dbReference type="EMBL" id="CP000285">
    <property type="protein sequence ID" value="ABE60214.1"/>
    <property type="molecule type" value="Genomic_DNA"/>
</dbReference>
<dbReference type="RefSeq" id="WP_011508160.1">
    <property type="nucleotide sequence ID" value="NC_007963.1"/>
</dbReference>
<dbReference type="SMR" id="Q1QTJ4"/>
<dbReference type="STRING" id="290398.Csal_2868"/>
<dbReference type="GeneID" id="95335563"/>
<dbReference type="KEGG" id="csa:Csal_2868"/>
<dbReference type="eggNOG" id="COG0223">
    <property type="taxonomic scope" value="Bacteria"/>
</dbReference>
<dbReference type="HOGENOM" id="CLU_033347_1_2_6"/>
<dbReference type="OrthoDB" id="9802815at2"/>
<dbReference type="Proteomes" id="UP000000239">
    <property type="component" value="Chromosome"/>
</dbReference>
<dbReference type="GO" id="GO:0005829">
    <property type="term" value="C:cytosol"/>
    <property type="evidence" value="ECO:0007669"/>
    <property type="project" value="TreeGrafter"/>
</dbReference>
<dbReference type="GO" id="GO:0004479">
    <property type="term" value="F:methionyl-tRNA formyltransferase activity"/>
    <property type="evidence" value="ECO:0007669"/>
    <property type="project" value="UniProtKB-UniRule"/>
</dbReference>
<dbReference type="CDD" id="cd08646">
    <property type="entry name" value="FMT_core_Met-tRNA-FMT_N"/>
    <property type="match status" value="1"/>
</dbReference>
<dbReference type="CDD" id="cd08704">
    <property type="entry name" value="Met_tRNA_FMT_C"/>
    <property type="match status" value="1"/>
</dbReference>
<dbReference type="FunFam" id="3.40.50.12230:FF:000001">
    <property type="entry name" value="Methionyl-tRNA formyltransferase"/>
    <property type="match status" value="1"/>
</dbReference>
<dbReference type="FunFam" id="3.40.50.170:FF:000003">
    <property type="entry name" value="Methionyl-tRNA formyltransferase"/>
    <property type="match status" value="1"/>
</dbReference>
<dbReference type="Gene3D" id="3.10.25.10">
    <property type="entry name" value="Formyl transferase, C-terminal domain"/>
    <property type="match status" value="1"/>
</dbReference>
<dbReference type="Gene3D" id="3.40.50.170">
    <property type="entry name" value="Formyl transferase, N-terminal domain"/>
    <property type="match status" value="1"/>
</dbReference>
<dbReference type="HAMAP" id="MF_00182">
    <property type="entry name" value="Formyl_trans"/>
    <property type="match status" value="1"/>
</dbReference>
<dbReference type="InterPro" id="IPR005794">
    <property type="entry name" value="Fmt"/>
</dbReference>
<dbReference type="InterPro" id="IPR005793">
    <property type="entry name" value="Formyl_trans_C"/>
</dbReference>
<dbReference type="InterPro" id="IPR037022">
    <property type="entry name" value="Formyl_trans_C_sf"/>
</dbReference>
<dbReference type="InterPro" id="IPR002376">
    <property type="entry name" value="Formyl_transf_N"/>
</dbReference>
<dbReference type="InterPro" id="IPR036477">
    <property type="entry name" value="Formyl_transf_N_sf"/>
</dbReference>
<dbReference type="InterPro" id="IPR011034">
    <property type="entry name" value="Formyl_transferase-like_C_sf"/>
</dbReference>
<dbReference type="InterPro" id="IPR001555">
    <property type="entry name" value="GART_AS"/>
</dbReference>
<dbReference type="InterPro" id="IPR044135">
    <property type="entry name" value="Met-tRNA-FMT_C"/>
</dbReference>
<dbReference type="InterPro" id="IPR041711">
    <property type="entry name" value="Met-tRNA-FMT_N"/>
</dbReference>
<dbReference type="NCBIfam" id="TIGR00460">
    <property type="entry name" value="fmt"/>
    <property type="match status" value="1"/>
</dbReference>
<dbReference type="PANTHER" id="PTHR11138">
    <property type="entry name" value="METHIONYL-TRNA FORMYLTRANSFERASE"/>
    <property type="match status" value="1"/>
</dbReference>
<dbReference type="PANTHER" id="PTHR11138:SF5">
    <property type="entry name" value="METHIONYL-TRNA FORMYLTRANSFERASE, MITOCHONDRIAL"/>
    <property type="match status" value="1"/>
</dbReference>
<dbReference type="Pfam" id="PF02911">
    <property type="entry name" value="Formyl_trans_C"/>
    <property type="match status" value="1"/>
</dbReference>
<dbReference type="Pfam" id="PF00551">
    <property type="entry name" value="Formyl_trans_N"/>
    <property type="match status" value="1"/>
</dbReference>
<dbReference type="SUPFAM" id="SSF50486">
    <property type="entry name" value="FMT C-terminal domain-like"/>
    <property type="match status" value="1"/>
</dbReference>
<dbReference type="SUPFAM" id="SSF53328">
    <property type="entry name" value="Formyltransferase"/>
    <property type="match status" value="1"/>
</dbReference>
<dbReference type="PROSITE" id="PS00373">
    <property type="entry name" value="GART"/>
    <property type="match status" value="1"/>
</dbReference>
<sequence length="325" mass="34433">MSHSLRVVFAGTPDFAAASLLALLDSRHQVVAAYTQPDRPAGRGRKLTPSPVKALAQEHGLPVHQPTSLKDTDAQQTLAALEADVLVVVAYGLILPQAVLDIPRLGCLNVHASLLPRWRGAAPIQRAIEAGDTRSGVTIMQMDAGLDTGAMLLVRETPITATTTGGELHDRLAPLGGEAIVEALDALATDGLTATPQPSEGVTYAAKLSKAEAELDFTRPAHELAARVRAFNPWPVAWTRLAGEPLRLWLAEAEAEAERPGVAPGTLLQSAPDALRIACGHDGTQVVRITRAQLPGGKPLAVRDLLNARGERFPEGLRLGQEDRA</sequence>
<feature type="chain" id="PRO_1000020045" description="Methionyl-tRNA formyltransferase">
    <location>
        <begin position="1"/>
        <end position="325"/>
    </location>
</feature>
<feature type="binding site" evidence="1">
    <location>
        <begin position="113"/>
        <end position="116"/>
    </location>
    <ligand>
        <name>(6S)-5,6,7,8-tetrahydrofolate</name>
        <dbReference type="ChEBI" id="CHEBI:57453"/>
    </ligand>
</feature>